<proteinExistence type="evidence at transcript level"/>
<reference evidence="7" key="1">
    <citation type="journal article" date="1998" name="Genetics">
        <title>Dominant defects in Drosophila eye pigmentation resulting from a euchromatin-heterochromatin fusion gene.</title>
        <authorList>
            <person name="Rong Y.S."/>
            <person name="Golic K.G."/>
        </authorList>
    </citation>
    <scope>NUCLEOTIDE SEQUENCE [GENOMIC DNA]</scope>
    <scope>TISSUE SPECIFICITY</scope>
</reference>
<reference key="2">
    <citation type="journal article" date="2000" name="Science">
        <title>The genome sequence of Drosophila melanogaster.</title>
        <authorList>
            <person name="Adams M.D."/>
            <person name="Celniker S.E."/>
            <person name="Holt R.A."/>
            <person name="Evans C.A."/>
            <person name="Gocayne J.D."/>
            <person name="Amanatides P.G."/>
            <person name="Scherer S.E."/>
            <person name="Li P.W."/>
            <person name="Hoskins R.A."/>
            <person name="Galle R.F."/>
            <person name="George R.A."/>
            <person name="Lewis S.E."/>
            <person name="Richards S."/>
            <person name="Ashburner M."/>
            <person name="Henderson S.N."/>
            <person name="Sutton G.G."/>
            <person name="Wortman J.R."/>
            <person name="Yandell M.D."/>
            <person name="Zhang Q."/>
            <person name="Chen L.X."/>
            <person name="Brandon R.C."/>
            <person name="Rogers Y.-H.C."/>
            <person name="Blazej R.G."/>
            <person name="Champe M."/>
            <person name="Pfeiffer B.D."/>
            <person name="Wan K.H."/>
            <person name="Doyle C."/>
            <person name="Baxter E.G."/>
            <person name="Helt G."/>
            <person name="Nelson C.R."/>
            <person name="Miklos G.L.G."/>
            <person name="Abril J.F."/>
            <person name="Agbayani A."/>
            <person name="An H.-J."/>
            <person name="Andrews-Pfannkoch C."/>
            <person name="Baldwin D."/>
            <person name="Ballew R.M."/>
            <person name="Basu A."/>
            <person name="Baxendale J."/>
            <person name="Bayraktaroglu L."/>
            <person name="Beasley E.M."/>
            <person name="Beeson K.Y."/>
            <person name="Benos P.V."/>
            <person name="Berman B.P."/>
            <person name="Bhandari D."/>
            <person name="Bolshakov S."/>
            <person name="Borkova D."/>
            <person name="Botchan M.R."/>
            <person name="Bouck J."/>
            <person name="Brokstein P."/>
            <person name="Brottier P."/>
            <person name="Burtis K.C."/>
            <person name="Busam D.A."/>
            <person name="Butler H."/>
            <person name="Cadieu E."/>
            <person name="Center A."/>
            <person name="Chandra I."/>
            <person name="Cherry J.M."/>
            <person name="Cawley S."/>
            <person name="Dahlke C."/>
            <person name="Davenport L.B."/>
            <person name="Davies P."/>
            <person name="de Pablos B."/>
            <person name="Delcher A."/>
            <person name="Deng Z."/>
            <person name="Mays A.D."/>
            <person name="Dew I."/>
            <person name="Dietz S.M."/>
            <person name="Dodson K."/>
            <person name="Doup L.E."/>
            <person name="Downes M."/>
            <person name="Dugan-Rocha S."/>
            <person name="Dunkov B.C."/>
            <person name="Dunn P."/>
            <person name="Durbin K.J."/>
            <person name="Evangelista C.C."/>
            <person name="Ferraz C."/>
            <person name="Ferriera S."/>
            <person name="Fleischmann W."/>
            <person name="Fosler C."/>
            <person name="Gabrielian A.E."/>
            <person name="Garg N.S."/>
            <person name="Gelbart W.M."/>
            <person name="Glasser K."/>
            <person name="Glodek A."/>
            <person name="Gong F."/>
            <person name="Gorrell J.H."/>
            <person name="Gu Z."/>
            <person name="Guan P."/>
            <person name="Harris M."/>
            <person name="Harris N.L."/>
            <person name="Harvey D.A."/>
            <person name="Heiman T.J."/>
            <person name="Hernandez J.R."/>
            <person name="Houck J."/>
            <person name="Hostin D."/>
            <person name="Houston K.A."/>
            <person name="Howland T.J."/>
            <person name="Wei M.-H."/>
            <person name="Ibegwam C."/>
            <person name="Jalali M."/>
            <person name="Kalush F."/>
            <person name="Karpen G.H."/>
            <person name="Ke Z."/>
            <person name="Kennison J.A."/>
            <person name="Ketchum K.A."/>
            <person name="Kimmel B.E."/>
            <person name="Kodira C.D."/>
            <person name="Kraft C.L."/>
            <person name="Kravitz S."/>
            <person name="Kulp D."/>
            <person name="Lai Z."/>
            <person name="Lasko P."/>
            <person name="Lei Y."/>
            <person name="Levitsky A.A."/>
            <person name="Li J.H."/>
            <person name="Li Z."/>
            <person name="Liang Y."/>
            <person name="Lin X."/>
            <person name="Liu X."/>
            <person name="Mattei B."/>
            <person name="McIntosh T.C."/>
            <person name="McLeod M.P."/>
            <person name="McPherson D."/>
            <person name="Merkulov G."/>
            <person name="Milshina N.V."/>
            <person name="Mobarry C."/>
            <person name="Morris J."/>
            <person name="Moshrefi A."/>
            <person name="Mount S.M."/>
            <person name="Moy M."/>
            <person name="Murphy B."/>
            <person name="Murphy L."/>
            <person name="Muzny D.M."/>
            <person name="Nelson D.L."/>
            <person name="Nelson D.R."/>
            <person name="Nelson K.A."/>
            <person name="Nixon K."/>
            <person name="Nusskern D.R."/>
            <person name="Pacleb J.M."/>
            <person name="Palazzolo M."/>
            <person name="Pittman G.S."/>
            <person name="Pan S."/>
            <person name="Pollard J."/>
            <person name="Puri V."/>
            <person name="Reese M.G."/>
            <person name="Reinert K."/>
            <person name="Remington K."/>
            <person name="Saunders R.D.C."/>
            <person name="Scheeler F."/>
            <person name="Shen H."/>
            <person name="Shue B.C."/>
            <person name="Siden-Kiamos I."/>
            <person name="Simpson M."/>
            <person name="Skupski M.P."/>
            <person name="Smith T.J."/>
            <person name="Spier E."/>
            <person name="Spradling A.C."/>
            <person name="Stapleton M."/>
            <person name="Strong R."/>
            <person name="Sun E."/>
            <person name="Svirskas R."/>
            <person name="Tector C."/>
            <person name="Turner R."/>
            <person name="Venter E."/>
            <person name="Wang A.H."/>
            <person name="Wang X."/>
            <person name="Wang Z.-Y."/>
            <person name="Wassarman D.A."/>
            <person name="Weinstock G.M."/>
            <person name="Weissenbach J."/>
            <person name="Williams S.M."/>
            <person name="Woodage T."/>
            <person name="Worley K.C."/>
            <person name="Wu D."/>
            <person name="Yang S."/>
            <person name="Yao Q.A."/>
            <person name="Ye J."/>
            <person name="Yeh R.-F."/>
            <person name="Zaveri J.S."/>
            <person name="Zhan M."/>
            <person name="Zhang G."/>
            <person name="Zhao Q."/>
            <person name="Zheng L."/>
            <person name="Zheng X.H."/>
            <person name="Zhong F.N."/>
            <person name="Zhong W."/>
            <person name="Zhou X."/>
            <person name="Zhu S.C."/>
            <person name="Zhu X."/>
            <person name="Smith H.O."/>
            <person name="Gibbs R.A."/>
            <person name="Myers E.W."/>
            <person name="Rubin G.M."/>
            <person name="Venter J.C."/>
        </authorList>
    </citation>
    <scope>NUCLEOTIDE SEQUENCE [LARGE SCALE GENOMIC DNA]</scope>
    <source>
        <strain evidence="3">Berkeley</strain>
    </source>
</reference>
<reference key="3">
    <citation type="journal article" date="2002" name="Genome Biol.">
        <title>Annotation of the Drosophila melanogaster euchromatic genome: a systematic review.</title>
        <authorList>
            <person name="Misra S."/>
            <person name="Crosby M.A."/>
            <person name="Mungall C.J."/>
            <person name="Matthews B.B."/>
            <person name="Campbell K.S."/>
            <person name="Hradecky P."/>
            <person name="Huang Y."/>
            <person name="Kaminker J.S."/>
            <person name="Millburn G.H."/>
            <person name="Prochnik S.E."/>
            <person name="Smith C.D."/>
            <person name="Tupy J.L."/>
            <person name="Whitfield E.J."/>
            <person name="Bayraktaroglu L."/>
            <person name="Berman B.P."/>
            <person name="Bettencourt B.R."/>
            <person name="Celniker S.E."/>
            <person name="de Grey A.D.N.J."/>
            <person name="Drysdale R.A."/>
            <person name="Harris N.L."/>
            <person name="Richter J."/>
            <person name="Russo S."/>
            <person name="Schroeder A.J."/>
            <person name="Shu S.Q."/>
            <person name="Stapleton M."/>
            <person name="Yamada C."/>
            <person name="Ashburner M."/>
            <person name="Gelbart W.M."/>
            <person name="Rubin G.M."/>
            <person name="Lewis S.E."/>
        </authorList>
    </citation>
    <scope>GENOME REANNOTATION</scope>
    <scope>ALTERNATIVE SPLICING</scope>
    <source>
        <strain>Berkeley</strain>
    </source>
</reference>
<reference key="4">
    <citation type="submission" date="2005-03" db="EMBL/GenBank/DDBJ databases">
        <authorList>
            <person name="Stapleton M."/>
            <person name="Carlson J.W."/>
            <person name="Chavez C."/>
            <person name="Frise E."/>
            <person name="George R.A."/>
            <person name="Pacleb J.M."/>
            <person name="Park S."/>
            <person name="Wan K.H."/>
            <person name="Yu C."/>
            <person name="Rubin G.M."/>
            <person name="Celniker S.E."/>
        </authorList>
    </citation>
    <scope>NUCLEOTIDE SEQUENCE [LARGE SCALE MRNA] (ISOFORM A)</scope>
    <source>
        <strain>Berkeley</strain>
        <tissue>Embryo</tissue>
    </source>
</reference>
<reference evidence="7" key="5">
    <citation type="journal article" date="2002" name="Genome Biol.">
        <title>A Drosophila full-length cDNA resource.</title>
        <authorList>
            <person name="Stapleton M."/>
            <person name="Carlson J.W."/>
            <person name="Brokstein P."/>
            <person name="Yu C."/>
            <person name="Champe M."/>
            <person name="George R.A."/>
            <person name="Guarin H."/>
            <person name="Kronmiller B."/>
            <person name="Pacleb J.M."/>
            <person name="Park S."/>
            <person name="Wan K.H."/>
            <person name="Rubin G.M."/>
            <person name="Celniker S.E."/>
        </authorList>
    </citation>
    <scope>NUCLEOTIDE SEQUENCE [LARGE SCALE MRNA] OF 604-968</scope>
    <source>
        <strain evidence="4">Berkeley</strain>
        <tissue evidence="4">Head</tissue>
    </source>
</reference>
<dbReference type="EC" id="1.5.1.5"/>
<dbReference type="EC" id="3.5.4.9"/>
<dbReference type="EC" id="6.3.4.3"/>
<dbReference type="EMBL" id="AF082097">
    <property type="protein sequence ID" value="AAC78847.1"/>
    <property type="molecule type" value="Genomic_DNA"/>
</dbReference>
<dbReference type="EMBL" id="AE014297">
    <property type="protein sequence ID" value="AAG22140.2"/>
    <property type="molecule type" value="Genomic_DNA"/>
</dbReference>
<dbReference type="EMBL" id="AE014297">
    <property type="protein sequence ID" value="AAN13478.1"/>
    <property type="molecule type" value="Genomic_DNA"/>
</dbReference>
<dbReference type="EMBL" id="AE014297">
    <property type="protein sequence ID" value="AAN13479.1"/>
    <property type="molecule type" value="Genomic_DNA"/>
</dbReference>
<dbReference type="EMBL" id="AE014297">
    <property type="protein sequence ID" value="AAX52944.1"/>
    <property type="molecule type" value="Genomic_DNA"/>
</dbReference>
<dbReference type="EMBL" id="BT021278">
    <property type="protein sequence ID" value="AAX33426.1"/>
    <property type="molecule type" value="mRNA"/>
</dbReference>
<dbReference type="EMBL" id="AY069146">
    <property type="protein sequence ID" value="AAL39291.1"/>
    <property type="status" value="ALT_INIT"/>
    <property type="molecule type" value="mRNA"/>
</dbReference>
<dbReference type="RefSeq" id="NP_001014614.1">
    <molecule id="O96553-1"/>
    <property type="nucleotide sequence ID" value="NM_001014614.2"/>
</dbReference>
<dbReference type="RefSeq" id="NP_477254.1">
    <molecule id="O96553-2"/>
    <property type="nucleotide sequence ID" value="NM_057906.4"/>
</dbReference>
<dbReference type="RefSeq" id="NP_731489.2">
    <molecule id="O96553-1"/>
    <property type="nucleotide sequence ID" value="NM_169350.3"/>
</dbReference>
<dbReference type="RefSeq" id="NP_731490.1">
    <molecule id="O96553-2"/>
    <property type="nucleotide sequence ID" value="NM_169351.2"/>
</dbReference>
<dbReference type="SMR" id="O96553"/>
<dbReference type="BioGRID" id="66423">
    <property type="interactions" value="2"/>
</dbReference>
<dbReference type="FunCoup" id="O96553">
    <property type="interactions" value="1506"/>
</dbReference>
<dbReference type="IntAct" id="O96553">
    <property type="interactions" value="5"/>
</dbReference>
<dbReference type="STRING" id="7227.FBpp0081741"/>
<dbReference type="GlyGen" id="O96553">
    <property type="glycosylation" value="1 site"/>
</dbReference>
<dbReference type="PaxDb" id="7227-FBpp0081741"/>
<dbReference type="DNASU" id="41279"/>
<dbReference type="EnsemblMetazoa" id="FBtr0082264">
    <molecule id="O96553-1"/>
    <property type="protein sequence ID" value="FBpp0081741"/>
    <property type="gene ID" value="FBgn0020385"/>
</dbReference>
<dbReference type="EnsemblMetazoa" id="FBtr0082265">
    <molecule id="O96553-2"/>
    <property type="protein sequence ID" value="FBpp0081742"/>
    <property type="gene ID" value="FBgn0020385"/>
</dbReference>
<dbReference type="EnsemblMetazoa" id="FBtr0082266">
    <molecule id="O96553-2"/>
    <property type="protein sequence ID" value="FBpp0081743"/>
    <property type="gene ID" value="FBgn0020385"/>
</dbReference>
<dbReference type="EnsemblMetazoa" id="FBtr0100144">
    <molecule id="O96553-1"/>
    <property type="protein sequence ID" value="FBpp0099494"/>
    <property type="gene ID" value="FBgn0020385"/>
</dbReference>
<dbReference type="GeneID" id="41279"/>
<dbReference type="KEGG" id="dme:Dmel_CG4067"/>
<dbReference type="UCSC" id="CG4067-RA">
    <molecule id="O96553-1"/>
    <property type="organism name" value="d. melanogaster"/>
</dbReference>
<dbReference type="AGR" id="FB:FBgn0020385"/>
<dbReference type="CTD" id="41279"/>
<dbReference type="FlyBase" id="FBgn0020385">
    <property type="gene designation" value="pug"/>
</dbReference>
<dbReference type="VEuPathDB" id="VectorBase:FBgn0020385"/>
<dbReference type="eggNOG" id="KOG4230">
    <property type="taxonomic scope" value="Eukaryota"/>
</dbReference>
<dbReference type="GeneTree" id="ENSGT00940000167165"/>
<dbReference type="InParanoid" id="O96553"/>
<dbReference type="OMA" id="QPIMFRR"/>
<dbReference type="OrthoDB" id="1845775at2759"/>
<dbReference type="PhylomeDB" id="O96553"/>
<dbReference type="Reactome" id="R-DME-196757">
    <property type="pathway name" value="Metabolism of folate and pterines"/>
</dbReference>
<dbReference type="SignaLink" id="O96553"/>
<dbReference type="UniPathway" id="UPA00193"/>
<dbReference type="BioGRID-ORCS" id="41279">
    <property type="hits" value="0 hits in 3 CRISPR screens"/>
</dbReference>
<dbReference type="GenomeRNAi" id="41279"/>
<dbReference type="PRO" id="PR:O96553"/>
<dbReference type="Proteomes" id="UP000000803">
    <property type="component" value="Chromosome 3R"/>
</dbReference>
<dbReference type="Bgee" id="FBgn0020385">
    <property type="expression patterns" value="Expressed in fat body cell in body wall and 96 other cell types or tissues"/>
</dbReference>
<dbReference type="ExpressionAtlas" id="O96553">
    <property type="expression patterns" value="baseline and differential"/>
</dbReference>
<dbReference type="GO" id="GO:0005737">
    <property type="term" value="C:cytoplasm"/>
    <property type="evidence" value="ECO:0000314"/>
    <property type="project" value="UniProtKB"/>
</dbReference>
<dbReference type="GO" id="GO:0005829">
    <property type="term" value="C:cytosol"/>
    <property type="evidence" value="ECO:0000318"/>
    <property type="project" value="GO_Central"/>
</dbReference>
<dbReference type="GO" id="GO:0005739">
    <property type="term" value="C:mitochondrion"/>
    <property type="evidence" value="ECO:0000250"/>
    <property type="project" value="FlyBase"/>
</dbReference>
<dbReference type="GO" id="GO:0005524">
    <property type="term" value="F:ATP binding"/>
    <property type="evidence" value="ECO:0007669"/>
    <property type="project" value="UniProtKB-KW"/>
</dbReference>
<dbReference type="GO" id="GO:0004329">
    <property type="term" value="F:formate-tetrahydrofolate ligase activity"/>
    <property type="evidence" value="ECO:0000250"/>
    <property type="project" value="FlyBase"/>
</dbReference>
<dbReference type="GO" id="GO:0004477">
    <property type="term" value="F:methenyltetrahydrofolate cyclohydrolase activity"/>
    <property type="evidence" value="ECO:0000318"/>
    <property type="project" value="GO_Central"/>
</dbReference>
<dbReference type="GO" id="GO:0004488">
    <property type="term" value="F:methylenetetrahydrofolate dehydrogenase (NADP+) activity"/>
    <property type="evidence" value="ECO:0000318"/>
    <property type="project" value="GO_Central"/>
</dbReference>
<dbReference type="GO" id="GO:0008652">
    <property type="term" value="P:amino acid biosynthetic process"/>
    <property type="evidence" value="ECO:0000303"/>
    <property type="project" value="UniProtKB"/>
</dbReference>
<dbReference type="GO" id="GO:0000105">
    <property type="term" value="P:L-histidine biosynthetic process"/>
    <property type="evidence" value="ECO:0007669"/>
    <property type="project" value="UniProtKB-KW"/>
</dbReference>
<dbReference type="GO" id="GO:0009086">
    <property type="term" value="P:methionine biosynthetic process"/>
    <property type="evidence" value="ECO:0007669"/>
    <property type="project" value="UniProtKB-KW"/>
</dbReference>
<dbReference type="GO" id="GO:0006164">
    <property type="term" value="P:purine nucleotide biosynthetic process"/>
    <property type="evidence" value="ECO:0007669"/>
    <property type="project" value="UniProtKB-KW"/>
</dbReference>
<dbReference type="GO" id="GO:0035999">
    <property type="term" value="P:tetrahydrofolate interconversion"/>
    <property type="evidence" value="ECO:0000318"/>
    <property type="project" value="GO_Central"/>
</dbReference>
<dbReference type="GO" id="GO:0046653">
    <property type="term" value="P:tetrahydrofolate metabolic process"/>
    <property type="evidence" value="ECO:0000250"/>
    <property type="project" value="FlyBase"/>
</dbReference>
<dbReference type="CDD" id="cd00477">
    <property type="entry name" value="FTHFS"/>
    <property type="match status" value="1"/>
</dbReference>
<dbReference type="CDD" id="cd01080">
    <property type="entry name" value="NAD_bind_m-THF_DH_Cyclohyd"/>
    <property type="match status" value="1"/>
</dbReference>
<dbReference type="FunFam" id="3.40.50.720:FF:000006">
    <property type="entry name" value="Bifunctional protein FolD"/>
    <property type="match status" value="1"/>
</dbReference>
<dbReference type="FunFam" id="3.40.50.10860:FF:000005">
    <property type="entry name" value="C-1-tetrahydrofolate synthase, cytoplasmic, putative"/>
    <property type="match status" value="1"/>
</dbReference>
<dbReference type="FunFam" id="1.10.8.770:FF:000001">
    <property type="entry name" value="Methylenetetrahydrofolate dehydrogenase (NADP+ dependent) 1 like"/>
    <property type="match status" value="1"/>
</dbReference>
<dbReference type="FunFam" id="3.40.50.300:FF:000556">
    <property type="entry name" value="Methylenetetrahydrofolate dehydrogenase (NADP+ dependent) 1 like"/>
    <property type="match status" value="1"/>
</dbReference>
<dbReference type="FunFam" id="3.40.50.300:FF:001522">
    <property type="entry name" value="Probable MIS1-C1-tetrahydrofolate synthase, mitochondrial"/>
    <property type="match status" value="1"/>
</dbReference>
<dbReference type="FunFam" id="3.10.410.10:FF:000001">
    <property type="entry name" value="Putative formate--tetrahydrofolate ligase"/>
    <property type="match status" value="1"/>
</dbReference>
<dbReference type="Gene3D" id="1.10.8.770">
    <property type="match status" value="1"/>
</dbReference>
<dbReference type="Gene3D" id="3.10.410.10">
    <property type="entry name" value="Formyltetrahydrofolate synthetase, domain 3"/>
    <property type="match status" value="1"/>
</dbReference>
<dbReference type="Gene3D" id="3.40.50.10860">
    <property type="entry name" value="Leucine Dehydrogenase, chain A, domain 1"/>
    <property type="match status" value="1"/>
</dbReference>
<dbReference type="Gene3D" id="3.40.50.720">
    <property type="entry name" value="NAD(P)-binding Rossmann-like Domain"/>
    <property type="match status" value="1"/>
</dbReference>
<dbReference type="Gene3D" id="3.40.50.300">
    <property type="entry name" value="P-loop containing nucleotide triphosphate hydrolases"/>
    <property type="match status" value="2"/>
</dbReference>
<dbReference type="HAMAP" id="MF_01543">
    <property type="entry name" value="FTHFS"/>
    <property type="match status" value="1"/>
</dbReference>
<dbReference type="HAMAP" id="MF_01576">
    <property type="entry name" value="THF_DHG_CYH"/>
    <property type="match status" value="1"/>
</dbReference>
<dbReference type="InterPro" id="IPR046346">
    <property type="entry name" value="Aminoacid_DH-like_N_sf"/>
</dbReference>
<dbReference type="InterPro" id="IPR000559">
    <property type="entry name" value="Formate_THF_ligase"/>
</dbReference>
<dbReference type="InterPro" id="IPR020628">
    <property type="entry name" value="Formate_THF_ligase_CS"/>
</dbReference>
<dbReference type="InterPro" id="IPR036291">
    <property type="entry name" value="NAD(P)-bd_dom_sf"/>
</dbReference>
<dbReference type="InterPro" id="IPR027417">
    <property type="entry name" value="P-loop_NTPase"/>
</dbReference>
<dbReference type="InterPro" id="IPR000672">
    <property type="entry name" value="THF_DH/CycHdrlase"/>
</dbReference>
<dbReference type="InterPro" id="IPR020630">
    <property type="entry name" value="THF_DH/CycHdrlase_cat_dom"/>
</dbReference>
<dbReference type="InterPro" id="IPR020867">
    <property type="entry name" value="THF_DH/CycHdrlase_CS"/>
</dbReference>
<dbReference type="InterPro" id="IPR020631">
    <property type="entry name" value="THF_DH/CycHdrlase_NAD-bd_dom"/>
</dbReference>
<dbReference type="PANTHER" id="PTHR48099:SF5">
    <property type="entry name" value="C-1-TETRAHYDROFOLATE SYNTHASE, CYTOPLASMIC"/>
    <property type="match status" value="1"/>
</dbReference>
<dbReference type="PANTHER" id="PTHR48099">
    <property type="entry name" value="C-1-TETRAHYDROFOLATE SYNTHASE, CYTOPLASMIC-RELATED"/>
    <property type="match status" value="1"/>
</dbReference>
<dbReference type="Pfam" id="PF01268">
    <property type="entry name" value="FTHFS"/>
    <property type="match status" value="1"/>
</dbReference>
<dbReference type="Pfam" id="PF00763">
    <property type="entry name" value="THF_DHG_CYH"/>
    <property type="match status" value="1"/>
</dbReference>
<dbReference type="Pfam" id="PF02882">
    <property type="entry name" value="THF_DHG_CYH_C"/>
    <property type="match status" value="1"/>
</dbReference>
<dbReference type="PRINTS" id="PR00085">
    <property type="entry name" value="THFDHDRGNASE"/>
</dbReference>
<dbReference type="SUPFAM" id="SSF53223">
    <property type="entry name" value="Aminoacid dehydrogenase-like, N-terminal domain"/>
    <property type="match status" value="1"/>
</dbReference>
<dbReference type="SUPFAM" id="SSF51735">
    <property type="entry name" value="NAD(P)-binding Rossmann-fold domains"/>
    <property type="match status" value="1"/>
</dbReference>
<dbReference type="SUPFAM" id="SSF52540">
    <property type="entry name" value="P-loop containing nucleoside triphosphate hydrolases"/>
    <property type="match status" value="1"/>
</dbReference>
<dbReference type="PROSITE" id="PS00721">
    <property type="entry name" value="FTHFS_1"/>
    <property type="match status" value="1"/>
</dbReference>
<dbReference type="PROSITE" id="PS00722">
    <property type="entry name" value="FTHFS_2"/>
    <property type="match status" value="1"/>
</dbReference>
<dbReference type="PROSITE" id="PS00766">
    <property type="entry name" value="THF_DHG_CYH_1"/>
    <property type="match status" value="1"/>
</dbReference>
<dbReference type="PROSITE" id="PS00767">
    <property type="entry name" value="THF_DHG_CYH_2"/>
    <property type="match status" value="1"/>
</dbReference>
<sequence>MSAQYQRFLKVLEKWPAEKSKVGSGEWTAEPAIKMSGAKIISGTAVAKSIREELRNEVTAMSKQLADFVPGLRIVQVGGREDSNVYIRMKIKAATEIGIDAAHVQLPRSITEVELLDKINDLNEDPRVHGIIVQMPLDCDTPIDSHRITDAVSPEKDVDGLHTVNEGRLAIGDLGGFLPCTPWGCLELIRRSGVEIAGARAVVLGRSKIVGTPAAELLKWANATVTVCHSKTRNLEEITRSADILVVGIGVAEMVKGSWIKPGAVVIDCGINVKPDASKASGSKLVGDVDYAEALQVAGHLTPVPGGVGPMTVAMLMKNTVRSAARFLERLAKSQWALQTLPLKPQRPVPSDIVIARAQKPKDIAVLAKEIGLEAREVSLYGNKKAKISLSVLERLKDKEVGHYVVVAGMTPTPLGEGKTTTLMGLVQALGAHKLRNTMAALRQPSQGPTFGIKGGAAGGGYAQVIPMEEFNLHLTGDIHAVSAANNLLAAQLDTRIFHENTQKDKALYDRLVPAIKGQRKFSPIQLRRLQKLGITKTDPDTLTADEYGPFARLDIDPDTIMWERVVDINDRYLRTITVGQSPTEKGISRETRFSISVASEIMAVLALSRSLEDMKQRLADMVVAFDKRGKPVTADDLGVTGALAVLLKDALEPNLMQSLEGTPVLVHAGPFANIAHGCNSIIADEVGLKLVGKNGFVCTEAGFGSDIGMEKFCNIKCRTSGRKPNAMVLVATVRAIKMHGGGAPVTPGAPLNKQYTEENLELVQKGLPNLLQHIENGKAFGMPVVVSLNAHSADTPAEHELVKKAALEAGAFAAVVSTHWADGGAGAVQLADAVIKACEQGNQFRLLYDLELPLVDKMNKIATTMYGAGKVVLSPAAEEKVKRLTDAGFGNLPICMSKVSGSFTGDAKIKGAPKGFTLDVEDVYVSAGAGFVVAMCGEVTKMPGLPTRPAIYDIDLNTETGEIEGLF</sequence>
<gene>
    <name type="primary">pug</name>
    <name type="ORF">CG4067</name>
</gene>
<keyword id="KW-0025">Alternative splicing</keyword>
<keyword id="KW-0028">Amino-acid biosynthesis</keyword>
<keyword id="KW-0067">ATP-binding</keyword>
<keyword id="KW-0963">Cytoplasm</keyword>
<keyword id="KW-0368">Histidine biosynthesis</keyword>
<keyword id="KW-0378">Hydrolase</keyword>
<keyword id="KW-0436">Ligase</keyword>
<keyword id="KW-0486">Methionine biosynthesis</keyword>
<keyword id="KW-0511">Multifunctional enzyme</keyword>
<keyword id="KW-0521">NADP</keyword>
<keyword id="KW-0547">Nucleotide-binding</keyword>
<keyword id="KW-0554">One-carbon metabolism</keyword>
<keyword id="KW-0560">Oxidoreductase</keyword>
<keyword id="KW-0658">Purine biosynthesis</keyword>
<keyword id="KW-1185">Reference proteome</keyword>
<accession>O96553</accession>
<accession>A4V2N7</accession>
<accession>A4V2N9</accession>
<accession>Q5BIE6</accession>
<accession>Q8T0P2</accession>
<evidence type="ECO:0000250" key="1"/>
<evidence type="ECO:0000250" key="2">
    <source>
        <dbReference type="UniProtKB" id="P11586"/>
    </source>
</evidence>
<evidence type="ECO:0000269" key="3">
    <source>
    </source>
</evidence>
<evidence type="ECO:0000269" key="4">
    <source>
    </source>
</evidence>
<evidence type="ECO:0000269" key="5">
    <source>
    </source>
</evidence>
<evidence type="ECO:0000303" key="6">
    <source ref="4"/>
</evidence>
<evidence type="ECO:0000305" key="7"/>
<protein>
    <recommendedName>
        <fullName>C-1-tetrahydrofolate synthase, cytoplasmic</fullName>
        <shortName>C1-THF synthase</shortName>
    </recommendedName>
    <domain>
        <recommendedName>
            <fullName>Methylenetetrahydrofolate dehydrogenase</fullName>
            <ecNumber>1.5.1.5</ecNumber>
        </recommendedName>
    </domain>
    <domain>
        <recommendedName>
            <fullName>Methenyltetrahydrofolate cyclohydrolase</fullName>
            <ecNumber>3.5.4.9</ecNumber>
        </recommendedName>
    </domain>
    <domain>
        <recommendedName>
            <fullName>Formyltetrahydrofolate synthetase</fullName>
            <ecNumber>6.3.4.3</ecNumber>
        </recommendedName>
    </domain>
</protein>
<organism>
    <name type="scientific">Drosophila melanogaster</name>
    <name type="common">Fruit fly</name>
    <dbReference type="NCBI Taxonomy" id="7227"/>
    <lineage>
        <taxon>Eukaryota</taxon>
        <taxon>Metazoa</taxon>
        <taxon>Ecdysozoa</taxon>
        <taxon>Arthropoda</taxon>
        <taxon>Hexapoda</taxon>
        <taxon>Insecta</taxon>
        <taxon>Pterygota</taxon>
        <taxon>Neoptera</taxon>
        <taxon>Endopterygota</taxon>
        <taxon>Diptera</taxon>
        <taxon>Brachycera</taxon>
        <taxon>Muscomorpha</taxon>
        <taxon>Ephydroidea</taxon>
        <taxon>Drosophilidae</taxon>
        <taxon>Drosophila</taxon>
        <taxon>Sophophora</taxon>
    </lineage>
</organism>
<feature type="chain" id="PRO_0000199324" description="C-1-tetrahydrofolate synthase, cytoplasmic">
    <location>
        <begin position="1"/>
        <end position="968"/>
    </location>
</feature>
<feature type="region of interest" description="Methylenetetrahydrofolate dehydrogenase and cyclohydrolase">
    <location>
        <begin position="1"/>
        <end position="338"/>
    </location>
</feature>
<feature type="region of interest" description="Formyltetrahydrofolate synthetase">
    <location>
        <begin position="339"/>
        <end position="968"/>
    </location>
</feature>
<feature type="binding site" evidence="1">
    <location>
        <begin position="86"/>
        <end position="90"/>
    </location>
    <ligand>
        <name>substrate</name>
    </ligand>
</feature>
<feature type="binding site" evidence="1">
    <location>
        <begin position="133"/>
        <end position="135"/>
    </location>
    <ligand>
        <name>substrate</name>
    </ligand>
</feature>
<feature type="binding site" evidence="1">
    <location>
        <begin position="205"/>
        <end position="207"/>
    </location>
    <ligand>
        <name>NADP(+)</name>
        <dbReference type="ChEBI" id="CHEBI:58349"/>
    </ligand>
</feature>
<feature type="binding site" evidence="1">
    <location>
        <position position="230"/>
    </location>
    <ligand>
        <name>NADP(+)</name>
        <dbReference type="ChEBI" id="CHEBI:58349"/>
    </ligand>
</feature>
<feature type="binding site" evidence="1">
    <location>
        <begin position="305"/>
        <end position="309"/>
    </location>
    <ligand>
        <name>substrate</name>
    </ligand>
</feature>
<feature type="binding site" evidence="1">
    <location>
        <begin position="413"/>
        <end position="420"/>
    </location>
    <ligand>
        <name>ATP</name>
        <dbReference type="ChEBI" id="CHEBI:30616"/>
    </ligand>
</feature>
<feature type="splice variant" id="VSP_010883" description="In isoform A." evidence="6">
    <location>
        <begin position="1"/>
        <end position="34"/>
    </location>
</feature>
<feature type="sequence conflict" description="In Ref. 4; AAX33426." evidence="7" ref="4">
    <original>E</original>
    <variation>K</variation>
    <location>
        <position position="879"/>
    </location>
</feature>
<name>C1TC_DROME</name>
<comment type="catalytic activity">
    <reaction evidence="2">
        <text>(6R)-5,10-methylene-5,6,7,8-tetrahydrofolate + NADP(+) = (6R)-5,10-methenyltetrahydrofolate + NADPH</text>
        <dbReference type="Rhea" id="RHEA:22812"/>
        <dbReference type="ChEBI" id="CHEBI:15636"/>
        <dbReference type="ChEBI" id="CHEBI:57455"/>
        <dbReference type="ChEBI" id="CHEBI:57783"/>
        <dbReference type="ChEBI" id="CHEBI:58349"/>
        <dbReference type="EC" id="1.5.1.5"/>
    </reaction>
</comment>
<comment type="catalytic activity">
    <reaction evidence="2">
        <text>(6R)-5,10-methenyltetrahydrofolate + H2O = (6R)-10-formyltetrahydrofolate + H(+)</text>
        <dbReference type="Rhea" id="RHEA:23700"/>
        <dbReference type="ChEBI" id="CHEBI:15377"/>
        <dbReference type="ChEBI" id="CHEBI:15378"/>
        <dbReference type="ChEBI" id="CHEBI:57455"/>
        <dbReference type="ChEBI" id="CHEBI:195366"/>
        <dbReference type="EC" id="3.5.4.9"/>
    </reaction>
</comment>
<comment type="catalytic activity">
    <reaction evidence="2">
        <text>(6S)-5,6,7,8-tetrahydrofolate + formate + ATP = (6R)-10-formyltetrahydrofolate + ADP + phosphate</text>
        <dbReference type="Rhea" id="RHEA:20221"/>
        <dbReference type="ChEBI" id="CHEBI:15740"/>
        <dbReference type="ChEBI" id="CHEBI:30616"/>
        <dbReference type="ChEBI" id="CHEBI:43474"/>
        <dbReference type="ChEBI" id="CHEBI:57453"/>
        <dbReference type="ChEBI" id="CHEBI:195366"/>
        <dbReference type="ChEBI" id="CHEBI:456216"/>
        <dbReference type="EC" id="6.3.4.3"/>
    </reaction>
</comment>
<comment type="pathway">
    <text>One-carbon metabolism; tetrahydrofolate interconversion.</text>
</comment>
<comment type="subunit">
    <text evidence="2">Homodimer.</text>
</comment>
<comment type="subcellular location">
    <subcellularLocation>
        <location>Cytoplasm</location>
    </subcellularLocation>
</comment>
<comment type="alternative products">
    <event type="alternative splicing"/>
    <isoform>
        <id>O96553-1</id>
        <name>B</name>
        <name>D</name>
        <sequence type="displayed"/>
    </isoform>
    <isoform>
        <id>O96553-2</id>
        <name>A</name>
        <name>C</name>
        <sequence type="described" ref="VSP_010883"/>
    </isoform>
</comment>
<comment type="tissue specificity">
    <text evidence="5">Present in all tissues.</text>
</comment>
<comment type="domain">
    <text>This trifunctional enzyme consists of two major domains: a N-terminal part, containing the methylene-THF dehydrogenase and the methenyl-THF cyclohydrolase activities and a larger formyl-THF synthetase domain.</text>
</comment>
<comment type="similarity">
    <text evidence="7">In the N-terminal section; belongs to the tetrahydrofolate dehydrogenase/cyclohydrolase family.</text>
</comment>
<comment type="similarity">
    <text evidence="7">In the C-terminal section; belongs to the formate--tetrahydrofolate ligase family.</text>
</comment>
<comment type="sequence caution" evidence="7">
    <conflict type="erroneous initiation">
        <sequence resource="EMBL-CDS" id="AAL39291"/>
    </conflict>
</comment>